<name>ATPA_BACHK</name>
<protein>
    <recommendedName>
        <fullName evidence="1">ATP synthase subunit alpha</fullName>
        <ecNumber evidence="1">7.1.2.2</ecNumber>
    </recommendedName>
    <alternativeName>
        <fullName evidence="1">ATP synthase F1 sector subunit alpha</fullName>
    </alternativeName>
    <alternativeName>
        <fullName evidence="1">F-ATPase subunit alpha</fullName>
    </alternativeName>
</protein>
<organism>
    <name type="scientific">Bacillus thuringiensis subsp. konkukian (strain 97-27)</name>
    <dbReference type="NCBI Taxonomy" id="281309"/>
    <lineage>
        <taxon>Bacteria</taxon>
        <taxon>Bacillati</taxon>
        <taxon>Bacillota</taxon>
        <taxon>Bacilli</taxon>
        <taxon>Bacillales</taxon>
        <taxon>Bacillaceae</taxon>
        <taxon>Bacillus</taxon>
        <taxon>Bacillus cereus group</taxon>
    </lineage>
</organism>
<reference key="1">
    <citation type="journal article" date="2006" name="J. Bacteriol.">
        <title>Pathogenomic sequence analysis of Bacillus cereus and Bacillus thuringiensis isolates closely related to Bacillus anthracis.</title>
        <authorList>
            <person name="Han C.S."/>
            <person name="Xie G."/>
            <person name="Challacombe J.F."/>
            <person name="Altherr M.R."/>
            <person name="Bhotika S.S."/>
            <person name="Bruce D."/>
            <person name="Campbell C.S."/>
            <person name="Campbell M.L."/>
            <person name="Chen J."/>
            <person name="Chertkov O."/>
            <person name="Cleland C."/>
            <person name="Dimitrijevic M."/>
            <person name="Doggett N.A."/>
            <person name="Fawcett J.J."/>
            <person name="Glavina T."/>
            <person name="Goodwin L.A."/>
            <person name="Hill K.K."/>
            <person name="Hitchcock P."/>
            <person name="Jackson P.J."/>
            <person name="Keim P."/>
            <person name="Kewalramani A.R."/>
            <person name="Longmire J."/>
            <person name="Lucas S."/>
            <person name="Malfatti S."/>
            <person name="McMurry K."/>
            <person name="Meincke L.J."/>
            <person name="Misra M."/>
            <person name="Moseman B.L."/>
            <person name="Mundt M."/>
            <person name="Munk A.C."/>
            <person name="Okinaka R.T."/>
            <person name="Parson-Quintana B."/>
            <person name="Reilly L.P."/>
            <person name="Richardson P."/>
            <person name="Robinson D.L."/>
            <person name="Rubin E."/>
            <person name="Saunders E."/>
            <person name="Tapia R."/>
            <person name="Tesmer J.G."/>
            <person name="Thayer N."/>
            <person name="Thompson L.S."/>
            <person name="Tice H."/>
            <person name="Ticknor L.O."/>
            <person name="Wills P.L."/>
            <person name="Brettin T.S."/>
            <person name="Gilna P."/>
        </authorList>
    </citation>
    <scope>NUCLEOTIDE SEQUENCE [LARGE SCALE GENOMIC DNA]</scope>
    <source>
        <strain>97-27</strain>
    </source>
</reference>
<keyword id="KW-0066">ATP synthesis</keyword>
<keyword id="KW-0067">ATP-binding</keyword>
<keyword id="KW-1003">Cell membrane</keyword>
<keyword id="KW-0139">CF(1)</keyword>
<keyword id="KW-0375">Hydrogen ion transport</keyword>
<keyword id="KW-0406">Ion transport</keyword>
<keyword id="KW-0472">Membrane</keyword>
<keyword id="KW-0547">Nucleotide-binding</keyword>
<keyword id="KW-1278">Translocase</keyword>
<keyword id="KW-0813">Transport</keyword>
<gene>
    <name evidence="1" type="primary">atpA</name>
    <name type="ordered locus">BT9727_4990</name>
</gene>
<feature type="chain" id="PRO_0000238198" description="ATP synthase subunit alpha">
    <location>
        <begin position="1"/>
        <end position="502"/>
    </location>
</feature>
<feature type="region of interest" description="Disordered" evidence="2">
    <location>
        <begin position="115"/>
        <end position="135"/>
    </location>
</feature>
<feature type="binding site" evidence="1">
    <location>
        <begin position="169"/>
        <end position="176"/>
    </location>
    <ligand>
        <name>ATP</name>
        <dbReference type="ChEBI" id="CHEBI:30616"/>
    </ligand>
</feature>
<feature type="site" description="Required for activity" evidence="1">
    <location>
        <position position="362"/>
    </location>
</feature>
<dbReference type="EC" id="7.1.2.2" evidence="1"/>
<dbReference type="EMBL" id="AE017355">
    <property type="protein sequence ID" value="AAT62609.1"/>
    <property type="molecule type" value="Genomic_DNA"/>
</dbReference>
<dbReference type="RefSeq" id="WP_000027518.1">
    <property type="nucleotide sequence ID" value="NC_005957.1"/>
</dbReference>
<dbReference type="RefSeq" id="YP_039299.1">
    <property type="nucleotide sequence ID" value="NC_005957.1"/>
</dbReference>
<dbReference type="SMR" id="Q6HAX7"/>
<dbReference type="GeneID" id="93005816"/>
<dbReference type="KEGG" id="btk:BT9727_4990"/>
<dbReference type="PATRIC" id="fig|281309.8.peg.5307"/>
<dbReference type="HOGENOM" id="CLU_010091_2_1_9"/>
<dbReference type="Proteomes" id="UP000001301">
    <property type="component" value="Chromosome"/>
</dbReference>
<dbReference type="GO" id="GO:0005886">
    <property type="term" value="C:plasma membrane"/>
    <property type="evidence" value="ECO:0007669"/>
    <property type="project" value="UniProtKB-SubCell"/>
</dbReference>
<dbReference type="GO" id="GO:0045259">
    <property type="term" value="C:proton-transporting ATP synthase complex"/>
    <property type="evidence" value="ECO:0007669"/>
    <property type="project" value="UniProtKB-KW"/>
</dbReference>
<dbReference type="GO" id="GO:0043531">
    <property type="term" value="F:ADP binding"/>
    <property type="evidence" value="ECO:0007669"/>
    <property type="project" value="TreeGrafter"/>
</dbReference>
<dbReference type="GO" id="GO:0005524">
    <property type="term" value="F:ATP binding"/>
    <property type="evidence" value="ECO:0007669"/>
    <property type="project" value="UniProtKB-UniRule"/>
</dbReference>
<dbReference type="GO" id="GO:0046933">
    <property type="term" value="F:proton-transporting ATP synthase activity, rotational mechanism"/>
    <property type="evidence" value="ECO:0007669"/>
    <property type="project" value="UniProtKB-UniRule"/>
</dbReference>
<dbReference type="CDD" id="cd18113">
    <property type="entry name" value="ATP-synt_F1_alpha_C"/>
    <property type="match status" value="1"/>
</dbReference>
<dbReference type="CDD" id="cd18116">
    <property type="entry name" value="ATP-synt_F1_alpha_N"/>
    <property type="match status" value="1"/>
</dbReference>
<dbReference type="CDD" id="cd01132">
    <property type="entry name" value="F1-ATPase_alpha_CD"/>
    <property type="match status" value="1"/>
</dbReference>
<dbReference type="FunFam" id="1.20.150.20:FF:000001">
    <property type="entry name" value="ATP synthase subunit alpha"/>
    <property type="match status" value="1"/>
</dbReference>
<dbReference type="FunFam" id="2.40.30.20:FF:000001">
    <property type="entry name" value="ATP synthase subunit alpha"/>
    <property type="match status" value="1"/>
</dbReference>
<dbReference type="FunFam" id="3.40.50.300:FF:000002">
    <property type="entry name" value="ATP synthase subunit alpha"/>
    <property type="match status" value="1"/>
</dbReference>
<dbReference type="Gene3D" id="2.40.30.20">
    <property type="match status" value="1"/>
</dbReference>
<dbReference type="Gene3D" id="1.20.150.20">
    <property type="entry name" value="ATP synthase alpha/beta chain, C-terminal domain"/>
    <property type="match status" value="1"/>
</dbReference>
<dbReference type="Gene3D" id="3.40.50.300">
    <property type="entry name" value="P-loop containing nucleotide triphosphate hydrolases"/>
    <property type="match status" value="1"/>
</dbReference>
<dbReference type="HAMAP" id="MF_01346">
    <property type="entry name" value="ATP_synth_alpha_bact"/>
    <property type="match status" value="1"/>
</dbReference>
<dbReference type="InterPro" id="IPR023366">
    <property type="entry name" value="ATP_synth_asu-like_sf"/>
</dbReference>
<dbReference type="InterPro" id="IPR000793">
    <property type="entry name" value="ATP_synth_asu_C"/>
</dbReference>
<dbReference type="InterPro" id="IPR038376">
    <property type="entry name" value="ATP_synth_asu_C_sf"/>
</dbReference>
<dbReference type="InterPro" id="IPR033732">
    <property type="entry name" value="ATP_synth_F1_a_nt-bd_dom"/>
</dbReference>
<dbReference type="InterPro" id="IPR005294">
    <property type="entry name" value="ATP_synth_F1_asu"/>
</dbReference>
<dbReference type="InterPro" id="IPR020003">
    <property type="entry name" value="ATPase_a/bsu_AS"/>
</dbReference>
<dbReference type="InterPro" id="IPR004100">
    <property type="entry name" value="ATPase_F1/V1/A1_a/bsu_N"/>
</dbReference>
<dbReference type="InterPro" id="IPR036121">
    <property type="entry name" value="ATPase_F1/V1/A1_a/bsu_N_sf"/>
</dbReference>
<dbReference type="InterPro" id="IPR000194">
    <property type="entry name" value="ATPase_F1/V1/A1_a/bsu_nucl-bd"/>
</dbReference>
<dbReference type="InterPro" id="IPR027417">
    <property type="entry name" value="P-loop_NTPase"/>
</dbReference>
<dbReference type="NCBIfam" id="TIGR00962">
    <property type="entry name" value="atpA"/>
    <property type="match status" value="1"/>
</dbReference>
<dbReference type="NCBIfam" id="NF009884">
    <property type="entry name" value="PRK13343.1"/>
    <property type="match status" value="1"/>
</dbReference>
<dbReference type="PANTHER" id="PTHR48082">
    <property type="entry name" value="ATP SYNTHASE SUBUNIT ALPHA, MITOCHONDRIAL"/>
    <property type="match status" value="1"/>
</dbReference>
<dbReference type="PANTHER" id="PTHR48082:SF2">
    <property type="entry name" value="ATP SYNTHASE SUBUNIT ALPHA, MITOCHONDRIAL"/>
    <property type="match status" value="1"/>
</dbReference>
<dbReference type="Pfam" id="PF00006">
    <property type="entry name" value="ATP-synt_ab"/>
    <property type="match status" value="1"/>
</dbReference>
<dbReference type="Pfam" id="PF00306">
    <property type="entry name" value="ATP-synt_ab_C"/>
    <property type="match status" value="1"/>
</dbReference>
<dbReference type="Pfam" id="PF02874">
    <property type="entry name" value="ATP-synt_ab_N"/>
    <property type="match status" value="1"/>
</dbReference>
<dbReference type="PIRSF" id="PIRSF039088">
    <property type="entry name" value="F_ATPase_subunit_alpha"/>
    <property type="match status" value="1"/>
</dbReference>
<dbReference type="SUPFAM" id="SSF47917">
    <property type="entry name" value="C-terminal domain of alpha and beta subunits of F1 ATP synthase"/>
    <property type="match status" value="1"/>
</dbReference>
<dbReference type="SUPFAM" id="SSF50615">
    <property type="entry name" value="N-terminal domain of alpha and beta subunits of F1 ATP synthase"/>
    <property type="match status" value="1"/>
</dbReference>
<dbReference type="SUPFAM" id="SSF52540">
    <property type="entry name" value="P-loop containing nucleoside triphosphate hydrolases"/>
    <property type="match status" value="1"/>
</dbReference>
<dbReference type="PROSITE" id="PS00152">
    <property type="entry name" value="ATPASE_ALPHA_BETA"/>
    <property type="match status" value="1"/>
</dbReference>
<accession>Q6HAX7</accession>
<sequence>MSIRAEEISALIKQQIENYQSEIEVSDVGTVIQVGDGIARAHGLDNVMAGELVEFSNGVMGLAQNLEENNVGIIILGPYTEIREGDEVRRTGRIMQVPVGKELIGRVVNPLGQPVDGLGPINTTNTRPIESPAPGVMDRKSVHEPLQTGIKAIDALVPIGRGQRELIIGDRQTGKTAVALDTIINQKDEDMICIYVAIGQKESTVRNVVETLRKHGALEYTIVVTASASQPAPLLYLAPYAGVTMGEEFMYNGKHVLVVYDDLSKQAAAYRELSLLLRRPPGREAYPGDVFYLHSRLLERAAKLSDAKGGGSLTALPFIETQAGDVSAYIPTNVISITDGQIFLQSDLFFSGVRPAIDAGTSVSRVGGSAQIKAMSKVSGTLRLDLASYRELEAFAQFGSDLDKATQAKLNRGARTVEVLKQGLHKPLRVEKQVIILYALTRGFLDDIPVVDITRFEEEFHAWLDSNATDLLEEIRTTKKLADDDKFAAAINGFKKVFVASE</sequence>
<evidence type="ECO:0000255" key="1">
    <source>
        <dbReference type="HAMAP-Rule" id="MF_01346"/>
    </source>
</evidence>
<evidence type="ECO:0000256" key="2">
    <source>
        <dbReference type="SAM" id="MobiDB-lite"/>
    </source>
</evidence>
<comment type="function">
    <text evidence="1">Produces ATP from ADP in the presence of a proton gradient across the membrane. The alpha chain is a regulatory subunit.</text>
</comment>
<comment type="catalytic activity">
    <reaction evidence="1">
        <text>ATP + H2O + 4 H(+)(in) = ADP + phosphate + 5 H(+)(out)</text>
        <dbReference type="Rhea" id="RHEA:57720"/>
        <dbReference type="ChEBI" id="CHEBI:15377"/>
        <dbReference type="ChEBI" id="CHEBI:15378"/>
        <dbReference type="ChEBI" id="CHEBI:30616"/>
        <dbReference type="ChEBI" id="CHEBI:43474"/>
        <dbReference type="ChEBI" id="CHEBI:456216"/>
        <dbReference type="EC" id="7.1.2.2"/>
    </reaction>
</comment>
<comment type="subunit">
    <text evidence="1">F-type ATPases have 2 components, CF(1) - the catalytic core - and CF(0) - the membrane proton channel. CF(1) has five subunits: alpha(3), beta(3), gamma(1), delta(1), epsilon(1). CF(0) has three main subunits: a(1), b(2) and c(9-12). The alpha and beta chains form an alternating ring which encloses part of the gamma chain. CF(1) is attached to CF(0) by a central stalk formed by the gamma and epsilon chains, while a peripheral stalk is formed by the delta and b chains.</text>
</comment>
<comment type="subcellular location">
    <subcellularLocation>
        <location evidence="1">Cell membrane</location>
        <topology evidence="1">Peripheral membrane protein</topology>
    </subcellularLocation>
</comment>
<comment type="similarity">
    <text evidence="1">Belongs to the ATPase alpha/beta chains family.</text>
</comment>
<proteinExistence type="inferred from homology"/>